<accession>Q9A802</accession>
<keyword id="KW-0227">DNA damage</keyword>
<keyword id="KW-0233">DNA recombination</keyword>
<keyword id="KW-0234">DNA repair</keyword>
<keyword id="KW-1185">Reference proteome</keyword>
<protein>
    <recommendedName>
        <fullName>DNA repair protein RecO</fullName>
    </recommendedName>
    <alternativeName>
        <fullName>Recombination protein O</fullName>
    </alternativeName>
</protein>
<gene>
    <name type="primary">recO</name>
    <name type="ordered locus">CC_1564</name>
</gene>
<reference key="1">
    <citation type="journal article" date="2001" name="Proc. Natl. Acad. Sci. U.S.A.">
        <title>Complete genome sequence of Caulobacter crescentus.</title>
        <authorList>
            <person name="Nierman W.C."/>
            <person name="Feldblyum T.V."/>
            <person name="Laub M.T."/>
            <person name="Paulsen I.T."/>
            <person name="Nelson K.E."/>
            <person name="Eisen J.A."/>
            <person name="Heidelberg J.F."/>
            <person name="Alley M.R.K."/>
            <person name="Ohta N."/>
            <person name="Maddock J.R."/>
            <person name="Potocka I."/>
            <person name="Nelson W.C."/>
            <person name="Newton A."/>
            <person name="Stephens C."/>
            <person name="Phadke N.D."/>
            <person name="Ely B."/>
            <person name="DeBoy R.T."/>
            <person name="Dodson R.J."/>
            <person name="Durkin A.S."/>
            <person name="Gwinn M.L."/>
            <person name="Haft D.H."/>
            <person name="Kolonay J.F."/>
            <person name="Smit J."/>
            <person name="Craven M.B."/>
            <person name="Khouri H.M."/>
            <person name="Shetty J."/>
            <person name="Berry K.J."/>
            <person name="Utterback T.R."/>
            <person name="Tran K."/>
            <person name="Wolf A.M."/>
            <person name="Vamathevan J.J."/>
            <person name="Ermolaeva M.D."/>
            <person name="White O."/>
            <person name="Salzberg S.L."/>
            <person name="Venter J.C."/>
            <person name="Shapiro L."/>
            <person name="Fraser C.M."/>
        </authorList>
    </citation>
    <scope>NUCLEOTIDE SEQUENCE [LARGE SCALE GENOMIC DNA]</scope>
    <source>
        <strain>ATCC 19089 / CIP 103742 / CB 15</strain>
    </source>
</reference>
<evidence type="ECO:0000250" key="1"/>
<evidence type="ECO:0000305" key="2"/>
<feature type="chain" id="PRO_0000204941" description="DNA repair protein RecO">
    <location>
        <begin position="1"/>
        <end position="250"/>
    </location>
</feature>
<dbReference type="EMBL" id="AE005673">
    <property type="protein sequence ID" value="AAK23543.1"/>
    <property type="molecule type" value="Genomic_DNA"/>
</dbReference>
<dbReference type="PIR" id="C87443">
    <property type="entry name" value="C87443"/>
</dbReference>
<dbReference type="RefSeq" id="NP_420375.1">
    <property type="nucleotide sequence ID" value="NC_002696.2"/>
</dbReference>
<dbReference type="SMR" id="Q9A802"/>
<dbReference type="STRING" id="190650.CC_1564"/>
<dbReference type="EnsemblBacteria" id="AAK23543">
    <property type="protein sequence ID" value="AAK23543"/>
    <property type="gene ID" value="CC_1564"/>
</dbReference>
<dbReference type="KEGG" id="ccr:CC_1564"/>
<dbReference type="PATRIC" id="fig|190650.5.peg.1592"/>
<dbReference type="eggNOG" id="COG1381">
    <property type="taxonomic scope" value="Bacteria"/>
</dbReference>
<dbReference type="HOGENOM" id="CLU_086029_0_0_5"/>
<dbReference type="BioCyc" id="CAULO:CC1564-MONOMER"/>
<dbReference type="Proteomes" id="UP000001816">
    <property type="component" value="Chromosome"/>
</dbReference>
<dbReference type="GO" id="GO:0043590">
    <property type="term" value="C:bacterial nucleoid"/>
    <property type="evidence" value="ECO:0007669"/>
    <property type="project" value="TreeGrafter"/>
</dbReference>
<dbReference type="GO" id="GO:0006310">
    <property type="term" value="P:DNA recombination"/>
    <property type="evidence" value="ECO:0007669"/>
    <property type="project" value="UniProtKB-UniRule"/>
</dbReference>
<dbReference type="GO" id="GO:0006302">
    <property type="term" value="P:double-strand break repair"/>
    <property type="evidence" value="ECO:0007669"/>
    <property type="project" value="TreeGrafter"/>
</dbReference>
<dbReference type="Gene3D" id="2.40.50.140">
    <property type="entry name" value="Nucleic acid-binding proteins"/>
    <property type="match status" value="1"/>
</dbReference>
<dbReference type="Gene3D" id="1.20.1440.120">
    <property type="entry name" value="Recombination protein O, C-terminal domain"/>
    <property type="match status" value="1"/>
</dbReference>
<dbReference type="HAMAP" id="MF_00201">
    <property type="entry name" value="RecO"/>
    <property type="match status" value="1"/>
</dbReference>
<dbReference type="InterPro" id="IPR037278">
    <property type="entry name" value="ARFGAP/RecO"/>
</dbReference>
<dbReference type="InterPro" id="IPR022572">
    <property type="entry name" value="DNA_rep/recomb_RecO_N"/>
</dbReference>
<dbReference type="InterPro" id="IPR012340">
    <property type="entry name" value="NA-bd_OB-fold"/>
</dbReference>
<dbReference type="InterPro" id="IPR003717">
    <property type="entry name" value="RecO"/>
</dbReference>
<dbReference type="InterPro" id="IPR042242">
    <property type="entry name" value="RecO_C"/>
</dbReference>
<dbReference type="NCBIfam" id="TIGR00613">
    <property type="entry name" value="reco"/>
    <property type="match status" value="1"/>
</dbReference>
<dbReference type="PANTHER" id="PTHR33991">
    <property type="entry name" value="DNA REPAIR PROTEIN RECO"/>
    <property type="match status" value="1"/>
</dbReference>
<dbReference type="PANTHER" id="PTHR33991:SF1">
    <property type="entry name" value="DNA REPAIR PROTEIN RECO"/>
    <property type="match status" value="1"/>
</dbReference>
<dbReference type="Pfam" id="PF02565">
    <property type="entry name" value="RecO_C"/>
    <property type="match status" value="1"/>
</dbReference>
<dbReference type="Pfam" id="PF11967">
    <property type="entry name" value="RecO_N"/>
    <property type="match status" value="1"/>
</dbReference>
<dbReference type="SUPFAM" id="SSF57863">
    <property type="entry name" value="ArfGap/RecO-like zinc finger"/>
    <property type="match status" value="1"/>
</dbReference>
<dbReference type="SUPFAM" id="SSF50249">
    <property type="entry name" value="Nucleic acid-binding proteins"/>
    <property type="match status" value="1"/>
</dbReference>
<organism>
    <name type="scientific">Caulobacter vibrioides (strain ATCC 19089 / CIP 103742 / CB 15)</name>
    <name type="common">Caulobacter crescentus</name>
    <dbReference type="NCBI Taxonomy" id="190650"/>
    <lineage>
        <taxon>Bacteria</taxon>
        <taxon>Pseudomonadati</taxon>
        <taxon>Pseudomonadota</taxon>
        <taxon>Alphaproteobacteria</taxon>
        <taxon>Caulobacterales</taxon>
        <taxon>Caulobacteraceae</taxon>
        <taxon>Caulobacter</taxon>
    </lineage>
</organism>
<name>RECO_CAUVC</name>
<proteinExistence type="inferred from homology"/>
<sequence>MGNPRLSLEWEDEAYVLSARSHGETGAIVELLTEARGKVAAHVAGAASRRMKPFLQPGARVIVRYRAKVEGQLGSATLEPMGEGPSSLFDDRLALAGLSAAAAVAAAALPEREAHPGAFHALEALIRVLEIPEIWPAVYVRYEAGLLQELGFGLDLSKCAATGAFDDLVYVSPRTGRAVSREAGKPYHDKLLPLPPFMLSSQGGLAEGDVKAGLDITGHFLEQFVFGPLNRPLPPARLWLLDRLAEADKL</sequence>
<comment type="function">
    <text evidence="1">Involved in DNA repair and RecF pathway recombination.</text>
</comment>
<comment type="similarity">
    <text evidence="2">Belongs to the RecO family.</text>
</comment>